<accession>O30387</accession>
<accession>Q1D0A7</accession>
<sequence>MTHSSLPGYFGPLFAVFLFVLGLCVGSFLNVVIARVPLDQSIVRPRSRCPRCGHVLAWYENIPLLSWLALRARCRGCGVPISVRYPLVELLTGLLFFACLRRFGWTYELVPALVLVSLLVPLAFIDLDHWILPLSMTVPGMLAGIALAFPLGMDAFRDALMGAAVGFLSFRMMEYVGWKVFQREALGAGDKYLVAMLGAFLTWRALLGVLLFASMQGAVVGILMLLATGRAGPRTENTQDEPAGDAPPLTMTWEFTQPGLPLWKRLLLVPVCLLVQPIPDAPLDEEGEEEEWVPERTSIPFGPWLALAGLELLLLGPWLSRVLPADIAMMLGGLP</sequence>
<evidence type="ECO:0000250" key="1">
    <source>
        <dbReference type="UniProtKB" id="P22610"/>
    </source>
</evidence>
<evidence type="ECO:0000255" key="2"/>
<evidence type="ECO:0000305" key="3"/>
<protein>
    <recommendedName>
        <fullName>Prepilin leader peptidase/N-methyltransferase</fullName>
    </recommendedName>
    <domain>
        <recommendedName>
            <fullName>Leader peptidase</fullName>
            <ecNumber evidence="1">3.4.23.43</ecNumber>
        </recommendedName>
        <alternativeName>
            <fullName>Prepilin peptidase</fullName>
        </alternativeName>
    </domain>
    <domain>
        <recommendedName>
            <fullName>N-methyltransferase</fullName>
            <ecNumber evidence="1">2.1.1.-</ecNumber>
        </recommendedName>
    </domain>
</protein>
<organism>
    <name type="scientific">Myxococcus xanthus (strain DK1622)</name>
    <dbReference type="NCBI Taxonomy" id="246197"/>
    <lineage>
        <taxon>Bacteria</taxon>
        <taxon>Pseudomonadati</taxon>
        <taxon>Myxococcota</taxon>
        <taxon>Myxococcia</taxon>
        <taxon>Myxococcales</taxon>
        <taxon>Cystobacterineae</taxon>
        <taxon>Myxococcaceae</taxon>
        <taxon>Myxococcus</taxon>
    </lineage>
</organism>
<dbReference type="EC" id="3.4.23.43" evidence="1"/>
<dbReference type="EC" id="2.1.1.-" evidence="1"/>
<dbReference type="EMBL" id="DQ242507">
    <property type="protein sequence ID" value="AAC36157.1"/>
    <property type="molecule type" value="Genomic_DNA"/>
</dbReference>
<dbReference type="EMBL" id="CP000113">
    <property type="protein sequence ID" value="ABF90994.1"/>
    <property type="molecule type" value="Genomic_DNA"/>
</dbReference>
<dbReference type="RefSeq" id="WP_011555730.1">
    <property type="nucleotide sequence ID" value="NC_008095.1"/>
</dbReference>
<dbReference type="STRING" id="246197.MXAN_5779"/>
<dbReference type="EnsemblBacteria" id="ABF90994">
    <property type="protein sequence ID" value="ABF90994"/>
    <property type="gene ID" value="MXAN_5779"/>
</dbReference>
<dbReference type="GeneID" id="41363022"/>
<dbReference type="KEGG" id="mxa:MXAN_5779"/>
<dbReference type="eggNOG" id="COG1989">
    <property type="taxonomic scope" value="Bacteria"/>
</dbReference>
<dbReference type="HOGENOM" id="CLU_057101_0_1_7"/>
<dbReference type="OrthoDB" id="9789291at2"/>
<dbReference type="Proteomes" id="UP000002402">
    <property type="component" value="Chromosome"/>
</dbReference>
<dbReference type="GO" id="GO:0005886">
    <property type="term" value="C:plasma membrane"/>
    <property type="evidence" value="ECO:0007669"/>
    <property type="project" value="UniProtKB-SubCell"/>
</dbReference>
<dbReference type="GO" id="GO:0004190">
    <property type="term" value="F:aspartic-type endopeptidase activity"/>
    <property type="evidence" value="ECO:0007669"/>
    <property type="project" value="UniProtKB-EC"/>
</dbReference>
<dbReference type="GO" id="GO:0046872">
    <property type="term" value="F:metal ion binding"/>
    <property type="evidence" value="ECO:0007669"/>
    <property type="project" value="UniProtKB-KW"/>
</dbReference>
<dbReference type="GO" id="GO:0008168">
    <property type="term" value="F:methyltransferase activity"/>
    <property type="evidence" value="ECO:0007669"/>
    <property type="project" value="UniProtKB-KW"/>
</dbReference>
<dbReference type="GO" id="GO:0032259">
    <property type="term" value="P:methylation"/>
    <property type="evidence" value="ECO:0007669"/>
    <property type="project" value="UniProtKB-KW"/>
</dbReference>
<dbReference type="GO" id="GO:0006465">
    <property type="term" value="P:signal peptide processing"/>
    <property type="evidence" value="ECO:0007669"/>
    <property type="project" value="TreeGrafter"/>
</dbReference>
<dbReference type="Gene3D" id="1.20.120.1220">
    <property type="match status" value="1"/>
</dbReference>
<dbReference type="InterPro" id="IPR014032">
    <property type="entry name" value="Peptidase_A24A_bac"/>
</dbReference>
<dbReference type="InterPro" id="IPR000045">
    <property type="entry name" value="Prepilin_IV_endopep_pep"/>
</dbReference>
<dbReference type="InterPro" id="IPR010627">
    <property type="entry name" value="Prepilin_pept_A24_N"/>
</dbReference>
<dbReference type="InterPro" id="IPR050882">
    <property type="entry name" value="Prepilin_peptidase/N-MTase"/>
</dbReference>
<dbReference type="PANTHER" id="PTHR30487:SF0">
    <property type="entry name" value="PREPILIN LEADER PEPTIDASE_N-METHYLTRANSFERASE-RELATED"/>
    <property type="match status" value="1"/>
</dbReference>
<dbReference type="PANTHER" id="PTHR30487">
    <property type="entry name" value="TYPE 4 PREPILIN-LIKE PROTEINS LEADER PEPTIDE-PROCESSING ENZYME"/>
    <property type="match status" value="1"/>
</dbReference>
<dbReference type="Pfam" id="PF06750">
    <property type="entry name" value="A24_N_bact"/>
    <property type="match status" value="1"/>
</dbReference>
<dbReference type="Pfam" id="PF01478">
    <property type="entry name" value="Peptidase_A24"/>
    <property type="match status" value="1"/>
</dbReference>
<dbReference type="PRINTS" id="PR00864">
    <property type="entry name" value="PREPILNPTASE"/>
</dbReference>
<reference key="1">
    <citation type="submission" date="1997-05" db="EMBL/GenBank/DDBJ databases">
        <title>The pilH gene encodes an ABC transporter required for type IV pilus biogenesis in Myxococcus xanthus.</title>
        <authorList>
            <person name="Wu S.S."/>
            <person name="Wu J."/>
            <person name="Cheng Y.L."/>
            <person name="Kaiser D."/>
        </authorList>
    </citation>
    <scope>NUCLEOTIDE SEQUENCE [GENOMIC DNA]</scope>
</reference>
<reference key="2">
    <citation type="journal article" date="2006" name="Proc. Natl. Acad. Sci. U.S.A.">
        <title>Evolution of sensory complexity recorded in a myxobacterial genome.</title>
        <authorList>
            <person name="Goldman B.S."/>
            <person name="Nierman W.C."/>
            <person name="Kaiser D."/>
            <person name="Slater S.C."/>
            <person name="Durkin A.S."/>
            <person name="Eisen J.A."/>
            <person name="Ronning C.M."/>
            <person name="Barbazuk W.B."/>
            <person name="Blanchard M."/>
            <person name="Field C."/>
            <person name="Halling C."/>
            <person name="Hinkle G."/>
            <person name="Iartchuk O."/>
            <person name="Kim H.S."/>
            <person name="Mackenzie C."/>
            <person name="Madupu R."/>
            <person name="Miller N."/>
            <person name="Shvartsbeyn A."/>
            <person name="Sullivan S.A."/>
            <person name="Vaudin M."/>
            <person name="Wiegand R."/>
            <person name="Kaplan H.B."/>
        </authorList>
    </citation>
    <scope>NUCLEOTIDE SEQUENCE [LARGE SCALE GENOMIC DNA]</scope>
    <source>
        <strain>DK1622</strain>
    </source>
</reference>
<keyword id="KW-0997">Cell inner membrane</keyword>
<keyword id="KW-1003">Cell membrane</keyword>
<keyword id="KW-0378">Hydrolase</keyword>
<keyword id="KW-0472">Membrane</keyword>
<keyword id="KW-0479">Metal-binding</keyword>
<keyword id="KW-0489">Methyltransferase</keyword>
<keyword id="KW-0511">Multifunctional enzyme</keyword>
<keyword id="KW-0645">Protease</keyword>
<keyword id="KW-1185">Reference proteome</keyword>
<keyword id="KW-0949">S-adenosyl-L-methionine</keyword>
<keyword id="KW-0808">Transferase</keyword>
<keyword id="KW-0812">Transmembrane</keyword>
<keyword id="KW-1133">Transmembrane helix</keyword>
<keyword id="KW-0862">Zinc</keyword>
<feature type="chain" id="PRO_0000192623" description="Prepilin leader peptidase/N-methyltransferase">
    <location>
        <begin position="1"/>
        <end position="335"/>
    </location>
</feature>
<feature type="transmembrane region" description="Helical" evidence="2">
    <location>
        <begin position="13"/>
        <end position="33"/>
    </location>
</feature>
<feature type="transmembrane region" description="Helical" evidence="2">
    <location>
        <begin position="105"/>
        <end position="125"/>
    </location>
</feature>
<feature type="transmembrane region" description="Helical" evidence="2">
    <location>
        <begin position="131"/>
        <end position="151"/>
    </location>
</feature>
<feature type="transmembrane region" description="Helical" evidence="2">
    <location>
        <begin position="206"/>
        <end position="226"/>
    </location>
</feature>
<feature type="transmembrane region" description="Helical" evidence="2">
    <location>
        <begin position="258"/>
        <end position="278"/>
    </location>
</feature>
<feature type="transmembrane region" description="Helical" evidence="2">
    <location>
        <begin position="299"/>
        <end position="319"/>
    </location>
</feature>
<feature type="binding site" evidence="1">
    <location>
        <position position="49"/>
    </location>
    <ligand>
        <name>Zn(2+)</name>
        <dbReference type="ChEBI" id="CHEBI:29105"/>
    </ligand>
</feature>
<feature type="binding site" evidence="1">
    <location>
        <position position="52"/>
    </location>
    <ligand>
        <name>Zn(2+)</name>
        <dbReference type="ChEBI" id="CHEBI:29105"/>
    </ligand>
</feature>
<feature type="binding site" evidence="1">
    <location>
        <position position="74"/>
    </location>
    <ligand>
        <name>Zn(2+)</name>
        <dbReference type="ChEBI" id="CHEBI:29105"/>
    </ligand>
</feature>
<feature type="binding site" evidence="1">
    <location>
        <position position="77"/>
    </location>
    <ligand>
        <name>Zn(2+)</name>
        <dbReference type="ChEBI" id="CHEBI:29105"/>
    </ligand>
</feature>
<name>LEP4_MYXXD</name>
<comment type="function">
    <text evidence="1">Plays an essential role in type IV pili and type II pseudopili formation by proteolytically removing the leader sequence from substrate proteins and subsequently monomethylating the alpha-amino group of the newly exposed N-terminal phenylalanine.</text>
</comment>
<comment type="catalytic activity">
    <reaction evidence="1">
        <text>Typically cleaves a -Gly-|-Phe- bond to release an N-terminal, basic peptide of 5-8 residues from type IV prepilin, and then N-methylates the new N-terminal amino group, the methyl donor being S-adenosyl-L-methionine.</text>
        <dbReference type="EC" id="3.4.23.43"/>
    </reaction>
</comment>
<comment type="cofactor">
    <cofactor evidence="1">
        <name>Zn(2+)</name>
        <dbReference type="ChEBI" id="CHEBI:29105"/>
    </cofactor>
    <text evidence="1">Zinc is required for the N-terminal methylation of the mature pilin, but not for signal peptide cleavage.</text>
</comment>
<comment type="subcellular location">
    <subcellularLocation>
        <location evidence="1">Cell inner membrane</location>
        <topology evidence="1">Multi-pass membrane protein</topology>
    </subcellularLocation>
</comment>
<comment type="similarity">
    <text evidence="3">Belongs to the peptidase A24 family.</text>
</comment>
<proteinExistence type="inferred from homology"/>
<gene>
    <name type="primary">pilD</name>
    <name type="ordered locus">MXAN_5779</name>
</gene>